<dbReference type="GO" id="GO:0005576">
    <property type="term" value="C:extracellular region"/>
    <property type="evidence" value="ECO:0007669"/>
    <property type="project" value="UniProtKB-SubCell"/>
</dbReference>
<dbReference type="GO" id="GO:0090729">
    <property type="term" value="F:toxin activity"/>
    <property type="evidence" value="ECO:0007669"/>
    <property type="project" value="UniProtKB-KW"/>
</dbReference>
<keyword id="KW-1015">Disulfide bond</keyword>
<keyword id="KW-0960">Knottin</keyword>
<keyword id="KW-0528">Neurotoxin</keyword>
<keyword id="KW-0964">Secreted</keyword>
<keyword id="KW-0732">Signal</keyword>
<keyword id="KW-0800">Toxin</keyword>
<organism>
    <name type="scientific">Californiconus californicus</name>
    <name type="common">California cone</name>
    <name type="synonym">Conus californicus</name>
    <dbReference type="NCBI Taxonomy" id="1736779"/>
    <lineage>
        <taxon>Eukaryota</taxon>
        <taxon>Metazoa</taxon>
        <taxon>Spiralia</taxon>
        <taxon>Lophotrochozoa</taxon>
        <taxon>Mollusca</taxon>
        <taxon>Gastropoda</taxon>
        <taxon>Caenogastropoda</taxon>
        <taxon>Neogastropoda</taxon>
        <taxon>Conoidea</taxon>
        <taxon>Conidae</taxon>
        <taxon>Californiconus</taxon>
    </lineage>
</organism>
<proteinExistence type="inferred from homology"/>
<protein>
    <recommendedName>
        <fullName evidence="3">Conotoxin Cal6.32</fullName>
    </recommendedName>
    <alternativeName>
        <fullName evidence="2">O1_cal6.32</fullName>
    </alternativeName>
</protein>
<feature type="signal peptide" evidence="1">
    <location>
        <begin position="1"/>
        <end position="22"/>
    </location>
</feature>
<feature type="peptide" id="PRO_0000450976" description="Conotoxin Cal6.32">
    <location>
        <begin position="23"/>
        <end position="51"/>
    </location>
</feature>
<feature type="disulfide bond" evidence="3">
    <location>
        <begin position="25"/>
        <end position="39"/>
    </location>
</feature>
<feature type="disulfide bond" evidence="3">
    <location>
        <begin position="32"/>
        <end position="43"/>
    </location>
</feature>
<feature type="disulfide bond" evidence="3">
    <location>
        <begin position="38"/>
        <end position="50"/>
    </location>
</feature>
<accession>P0DTZ4</accession>
<name>O1632_CONCL</name>
<evidence type="ECO:0000255" key="1"/>
<evidence type="ECO:0000303" key="2">
    <source>
    </source>
</evidence>
<evidence type="ECO:0000305" key="3"/>
<evidence type="ECO:0000305" key="4">
    <source>
    </source>
</evidence>
<sequence length="51" mass="5848">MKLTCVLIVSVLILTACQFTAAVDCHSTGYLCFWWHECCSNFCIPLQQRCF</sequence>
<reference key="1">
    <citation type="journal article" date="2019" name="Toxins">
        <title>The diversified O-superfamily in Californiconus californicus presents a conotoxin with antimycobacterial activity.</title>
        <authorList>
            <person name="Bernaldez-Sarabia J."/>
            <person name="Figueroa-Montiel A."/>
            <person name="Duenas S."/>
            <person name="Cervantes-Luevano K."/>
            <person name="Beltran J.A."/>
            <person name="Ortiz E."/>
            <person name="Jimenez S."/>
            <person name="Possani L.D."/>
            <person name="Paniagua-Solis J.F."/>
            <person name="Gonzalez-Canudas J."/>
            <person name="Licea-Navarro A."/>
        </authorList>
    </citation>
    <scope>NUCLEOTIDE SEQUENCE [MRNA]</scope>
    <source>
        <tissue>Venom duct</tissue>
    </source>
</reference>
<comment type="function">
    <text evidence="3">Probable neurotoxin.</text>
</comment>
<comment type="subcellular location">
    <subcellularLocation>
        <location evidence="4">Secreted</location>
    </subcellularLocation>
</comment>
<comment type="tissue specificity">
    <text evidence="4">Expressed by the venom duct.</text>
</comment>
<comment type="domain">
    <text evidence="3">The cysteine framework is VI/VII (C-C-CC-C-C).</text>
</comment>
<comment type="domain">
    <text evidence="3">The presence of a 'disulfide through disulfide knot' structurally defines this protein as a knottin.</text>
</comment>
<comment type="similarity">
    <text evidence="3">Belongs to the conotoxin O1 superfamily.</text>
</comment>